<name>SIG7_CAEEL</name>
<accession>G5EEW6</accession>
<accession>Q8I4J2</accession>
<protein>
    <recommendedName>
        <fullName evidence="8">Peptidyl-prolyl cis-trans isomerase sig-7</fullName>
        <ecNumber evidence="1">5.2.1.8</ecNumber>
    </recommendedName>
    <alternativeName>
        <fullName evidence="8">Cyclophilin-like protein sig-7</fullName>
    </alternativeName>
    <alternativeName>
        <fullName evidence="7">Silencer in germline 7</fullName>
    </alternativeName>
</protein>
<gene>
    <name evidence="10" type="primary">sig-7</name>
    <name evidence="10" type="ORF">F39H2.2</name>
</gene>
<comment type="function">
    <text evidence="1 6">Probable PPIase that accelerates the folding of proteins (By similarity). It catalyzes the cis-trans isomerization of proline imidic peptide bonds in oligopeptides (By similarity). Involved in RNA polymerase II (RNA pol II)-mediated transcription elongation, and in primary transcript splicing, including co-transcriptional trans-splicing, in association with the catalytic subunit of the RNA pol II complex ama-1 (PubMed:27541139). Also plays a role in the regulation of elongation-dependent phosphorylation of ama-1 to control transcription (PubMed:27541139). Involved in the transcription of several genes during embryogenesis and in particular, of genes related to developmental processes such as gastrulation, and also regulates transcription in germ cells from embryogenesis to adulthood (PubMed:27541139).</text>
</comment>
<comment type="catalytic activity">
    <reaction evidence="1">
        <text>[protein]-peptidylproline (omega=180) = [protein]-peptidylproline (omega=0)</text>
        <dbReference type="Rhea" id="RHEA:16237"/>
        <dbReference type="Rhea" id="RHEA-COMP:10747"/>
        <dbReference type="Rhea" id="RHEA-COMP:10748"/>
        <dbReference type="ChEBI" id="CHEBI:83833"/>
        <dbReference type="ChEBI" id="CHEBI:83834"/>
        <dbReference type="EC" id="5.2.1.8"/>
    </reaction>
</comment>
<comment type="subunit">
    <text evidence="6">Interacts with ama-1, the catalytic subunit of the RNA polymerase II (RNA pol II) complex.</text>
</comment>
<comment type="subcellular location">
    <subcellularLocation>
        <location evidence="6">Nucleus</location>
        <location evidence="6">Nucleoplasm</location>
    </subcellularLocation>
    <subcellularLocation>
        <location evidence="6">Chromosome</location>
    </subcellularLocation>
    <text evidence="6">Co-localizes with transcriptionally active chromatin in all autosomes of mitotic and meiotic nuclei in germ cells. In transcriptionally inactive diakinetic oocytes, diffusely localized in the nucleoplasm.</text>
</comment>
<comment type="alternative products">
    <event type="alternative splicing"/>
    <isoform>
        <id>G5EEW6-1</id>
        <name evidence="10">a</name>
        <sequence type="displayed"/>
    </isoform>
    <isoform>
        <id>G5EEW6-2</id>
        <name evidence="11">b</name>
        <sequence type="described" ref="VSP_058676"/>
    </isoform>
</comment>
<comment type="tissue specificity">
    <text evidence="6">Ubiquitous.</text>
</comment>
<comment type="developmental stage">
    <text evidence="6">Expressed at all developmental stages from embryogenesis to adulthood.</text>
</comment>
<comment type="disruption phenotype">
    <text evidence="6">Lethal during the early stages of larval development. RNAi-mediated knockdown results in 95% embryonic lethality with 86.15% of embryos exhibiting gastrulation defects with decreased expression of genes involved in gastrulation, and an increased abundance of unspliced RNAs, decreased levels of phosphorylated ama-1 at the 3' end of genes and decreased histone H3 modifications, which mark transcription elongation, in embryos. Rare survivors of lethality have multiple developmental defects in the soma and germline including a protruding vulva, multiple vulvae and failure to transition from spermatogenesis to oogenesis (also called masculinization of the germline or Mog phenotype).</text>
</comment>
<comment type="similarity">
    <text evidence="8">Belongs to the cyclophilin-type PPIase family. PPIL4 subfamily.</text>
</comment>
<keyword id="KW-0025">Alternative splicing</keyword>
<keyword id="KW-0158">Chromosome</keyword>
<keyword id="KW-0175">Coiled coil</keyword>
<keyword id="KW-0413">Isomerase</keyword>
<keyword id="KW-0539">Nucleus</keyword>
<keyword id="KW-1185">Reference proteome</keyword>
<keyword id="KW-0694">RNA-binding</keyword>
<keyword id="KW-0697">Rotamase</keyword>
<keyword id="KW-0804">Transcription</keyword>
<keyword id="KW-0805">Transcription regulation</keyword>
<evidence type="ECO:0000250" key="1">
    <source>
        <dbReference type="UniProtKB" id="Q08752"/>
    </source>
</evidence>
<evidence type="ECO:0000255" key="2"/>
<evidence type="ECO:0000255" key="3">
    <source>
        <dbReference type="PROSITE-ProRule" id="PRU00156"/>
    </source>
</evidence>
<evidence type="ECO:0000255" key="4">
    <source>
        <dbReference type="PROSITE-ProRule" id="PRU00176"/>
    </source>
</evidence>
<evidence type="ECO:0000256" key="5">
    <source>
        <dbReference type="SAM" id="MobiDB-lite"/>
    </source>
</evidence>
<evidence type="ECO:0000269" key="6">
    <source>
    </source>
</evidence>
<evidence type="ECO:0000303" key="7">
    <source>
    </source>
</evidence>
<evidence type="ECO:0000305" key="8"/>
<evidence type="ECO:0000312" key="9">
    <source>
        <dbReference type="Proteomes" id="UP000001940"/>
    </source>
</evidence>
<evidence type="ECO:0000312" key="10">
    <source>
        <dbReference type="WormBase" id="F39H2.2a"/>
    </source>
</evidence>
<evidence type="ECO:0000312" key="11">
    <source>
        <dbReference type="WormBase" id="F39H2.2b"/>
    </source>
</evidence>
<feature type="chain" id="PRO_0000438531" description="Peptidyl-prolyl cis-trans isomerase sig-7" evidence="8">
    <location>
        <begin position="1"/>
        <end position="427"/>
    </location>
</feature>
<feature type="domain" description="PPIase cyclophilin-type" evidence="3">
    <location>
        <begin position="6"/>
        <end position="161"/>
    </location>
</feature>
<feature type="domain" description="RRM" evidence="4">
    <location>
        <begin position="241"/>
        <end position="319"/>
    </location>
</feature>
<feature type="region of interest" description="Disordered" evidence="5">
    <location>
        <begin position="322"/>
        <end position="427"/>
    </location>
</feature>
<feature type="coiled-coil region" evidence="2">
    <location>
        <begin position="195"/>
        <end position="227"/>
    </location>
</feature>
<feature type="compositionally biased region" description="Polar residues" evidence="5">
    <location>
        <begin position="322"/>
        <end position="334"/>
    </location>
</feature>
<feature type="compositionally biased region" description="Basic residues" evidence="5">
    <location>
        <begin position="351"/>
        <end position="370"/>
    </location>
</feature>
<feature type="compositionally biased region" description="Basic and acidic residues" evidence="5">
    <location>
        <begin position="384"/>
        <end position="427"/>
    </location>
</feature>
<feature type="splice variant" id="VSP_058676" description="In isoform b." evidence="8">
    <location>
        <begin position="1"/>
        <end position="69"/>
    </location>
</feature>
<dbReference type="EC" id="5.2.1.8" evidence="1"/>
<dbReference type="EMBL" id="BX284601">
    <property type="protein sequence ID" value="CAB03088.2"/>
    <property type="molecule type" value="Genomic_DNA"/>
</dbReference>
<dbReference type="EMBL" id="BX284601">
    <property type="protein sequence ID" value="CAD56584.1"/>
    <property type="molecule type" value="Genomic_DNA"/>
</dbReference>
<dbReference type="PIR" id="T22008">
    <property type="entry name" value="T22008"/>
</dbReference>
<dbReference type="RefSeq" id="NP_001359651.1">
    <molecule id="G5EEW6-2"/>
    <property type="nucleotide sequence ID" value="NM_001373191.3"/>
</dbReference>
<dbReference type="RefSeq" id="NP_492343.2">
    <molecule id="G5EEW6-1"/>
    <property type="nucleotide sequence ID" value="NM_059942.5"/>
</dbReference>
<dbReference type="RefSeq" id="NP_871805.1">
    <property type="nucleotide sequence ID" value="NM_182005.4"/>
</dbReference>
<dbReference type="SMR" id="G5EEW6"/>
<dbReference type="FunCoup" id="G5EEW6">
    <property type="interactions" value="3067"/>
</dbReference>
<dbReference type="STRING" id="6239.F39H2.2a.2"/>
<dbReference type="PaxDb" id="6239-F39H2.2a"/>
<dbReference type="PeptideAtlas" id="G5EEW6"/>
<dbReference type="EnsemblMetazoa" id="F39H2.2a.1">
    <molecule id="G5EEW6-1"/>
    <property type="protein sequence ID" value="F39H2.2a.1"/>
    <property type="gene ID" value="WBGene00000890"/>
</dbReference>
<dbReference type="EnsemblMetazoa" id="F39H2.2b.1">
    <molecule id="G5EEW6-2"/>
    <property type="protein sequence ID" value="F39H2.2b.1"/>
    <property type="gene ID" value="WBGene00000890"/>
</dbReference>
<dbReference type="GeneID" id="172664"/>
<dbReference type="KEGG" id="cel:CELE_F39H2.2"/>
<dbReference type="UCSC" id="F39H2.2a">
    <property type="organism name" value="c. elegans"/>
</dbReference>
<dbReference type="AGR" id="WB:WBGene00000890"/>
<dbReference type="CTD" id="172664"/>
<dbReference type="WormBase" id="F39H2.2a">
    <molecule id="G5EEW6-1"/>
    <property type="protein sequence ID" value="CE32410"/>
    <property type="gene ID" value="WBGene00000890"/>
    <property type="gene designation" value="sig-7"/>
</dbReference>
<dbReference type="WormBase" id="F39H2.2b">
    <molecule id="G5EEW6-2"/>
    <property type="protein sequence ID" value="CE32411"/>
    <property type="gene ID" value="WBGene00000890"/>
    <property type="gene designation" value="sig-7"/>
</dbReference>
<dbReference type="eggNOG" id="KOG0415">
    <property type="taxonomic scope" value="Eukaryota"/>
</dbReference>
<dbReference type="GeneTree" id="ENSGT00940000156283"/>
<dbReference type="HOGENOM" id="CLU_018791_2_0_1"/>
<dbReference type="InParanoid" id="G5EEW6"/>
<dbReference type="OMA" id="KMRHTRM"/>
<dbReference type="OrthoDB" id="2083at2759"/>
<dbReference type="PhylomeDB" id="G5EEW6"/>
<dbReference type="Reactome" id="R-CEL-72163">
    <property type="pathway name" value="mRNA Splicing - Major Pathway"/>
</dbReference>
<dbReference type="PRO" id="PR:G5EEW6"/>
<dbReference type="Proteomes" id="UP000001940">
    <property type="component" value="Chromosome I"/>
</dbReference>
<dbReference type="Bgee" id="WBGene00000890">
    <property type="expression patterns" value="Expressed in germ line (C elegans) and 4 other cell types or tissues"/>
</dbReference>
<dbReference type="GO" id="GO:0000791">
    <property type="term" value="C:euchromatin"/>
    <property type="evidence" value="ECO:0000314"/>
    <property type="project" value="UniProtKB"/>
</dbReference>
<dbReference type="GO" id="GO:0005654">
    <property type="term" value="C:nucleoplasm"/>
    <property type="evidence" value="ECO:0000314"/>
    <property type="project" value="UniProtKB"/>
</dbReference>
<dbReference type="GO" id="GO:0005634">
    <property type="term" value="C:nucleus"/>
    <property type="evidence" value="ECO:0000314"/>
    <property type="project" value="UniProtKB"/>
</dbReference>
<dbReference type="GO" id="GO:0003755">
    <property type="term" value="F:peptidyl-prolyl cis-trans isomerase activity"/>
    <property type="evidence" value="ECO:0007669"/>
    <property type="project" value="UniProtKB-KW"/>
</dbReference>
<dbReference type="GO" id="GO:0003723">
    <property type="term" value="F:RNA binding"/>
    <property type="evidence" value="ECO:0007669"/>
    <property type="project" value="UniProtKB-KW"/>
</dbReference>
<dbReference type="GO" id="GO:0000993">
    <property type="term" value="F:RNA polymerase II complex binding"/>
    <property type="evidence" value="ECO:0000315"/>
    <property type="project" value="UniProtKB"/>
</dbReference>
<dbReference type="GO" id="GO:0002119">
    <property type="term" value="P:nematode larval development"/>
    <property type="evidence" value="ECO:0000315"/>
    <property type="project" value="UniProtKB"/>
</dbReference>
<dbReference type="GO" id="GO:2000543">
    <property type="term" value="P:positive regulation of gastrulation"/>
    <property type="evidence" value="ECO:0000315"/>
    <property type="project" value="UniProtKB"/>
</dbReference>
<dbReference type="GO" id="GO:0060282">
    <property type="term" value="P:positive regulation of oocyte development"/>
    <property type="evidence" value="ECO:0000315"/>
    <property type="project" value="UniProtKB"/>
</dbReference>
<dbReference type="GO" id="GO:0040026">
    <property type="term" value="P:positive regulation of vulval development"/>
    <property type="evidence" value="ECO:0000315"/>
    <property type="project" value="UniProtKB"/>
</dbReference>
<dbReference type="GO" id="GO:0140673">
    <property type="term" value="P:transcription elongation-coupled chromatin remodeling"/>
    <property type="evidence" value="ECO:0000315"/>
    <property type="project" value="GO_Central"/>
</dbReference>
<dbReference type="CDD" id="cd01921">
    <property type="entry name" value="cyclophilin_RRM"/>
    <property type="match status" value="1"/>
</dbReference>
<dbReference type="CDD" id="cd12235">
    <property type="entry name" value="RRM_PPIL4"/>
    <property type="match status" value="1"/>
</dbReference>
<dbReference type="FunFam" id="2.40.100.10:FF:000015">
    <property type="entry name" value="Peptidyl-prolyl cis-trans isomerase"/>
    <property type="match status" value="1"/>
</dbReference>
<dbReference type="FunFam" id="3.30.70.330:FF:001101">
    <property type="entry name" value="Peptidyl-prolyl cis-trans isomerase"/>
    <property type="match status" value="1"/>
</dbReference>
<dbReference type="Gene3D" id="3.30.70.330">
    <property type="match status" value="1"/>
</dbReference>
<dbReference type="Gene3D" id="2.40.100.10">
    <property type="entry name" value="Cyclophilin-like"/>
    <property type="match status" value="1"/>
</dbReference>
<dbReference type="InterPro" id="IPR035542">
    <property type="entry name" value="CRIP"/>
</dbReference>
<dbReference type="InterPro" id="IPR029000">
    <property type="entry name" value="Cyclophilin-like_dom_sf"/>
</dbReference>
<dbReference type="InterPro" id="IPR002130">
    <property type="entry name" value="Cyclophilin-type_PPIase_dom"/>
</dbReference>
<dbReference type="InterPro" id="IPR035538">
    <property type="entry name" value="Cyclophilin_PPIL4"/>
</dbReference>
<dbReference type="InterPro" id="IPR012677">
    <property type="entry name" value="Nucleotide-bd_a/b_plait_sf"/>
</dbReference>
<dbReference type="InterPro" id="IPR035979">
    <property type="entry name" value="RBD_domain_sf"/>
</dbReference>
<dbReference type="InterPro" id="IPR000504">
    <property type="entry name" value="RRM_dom"/>
</dbReference>
<dbReference type="PANTHER" id="PTHR45843">
    <property type="entry name" value="PEPTIDYL-PROLYL CIS-TRANS ISOMERASE-LIKE 4"/>
    <property type="match status" value="1"/>
</dbReference>
<dbReference type="PANTHER" id="PTHR45843:SF1">
    <property type="entry name" value="PEPTIDYL-PROLYL CIS-TRANS ISOMERASE-LIKE 4"/>
    <property type="match status" value="1"/>
</dbReference>
<dbReference type="Pfam" id="PF00160">
    <property type="entry name" value="Pro_isomerase"/>
    <property type="match status" value="1"/>
</dbReference>
<dbReference type="Pfam" id="PF00076">
    <property type="entry name" value="RRM_1"/>
    <property type="match status" value="1"/>
</dbReference>
<dbReference type="PRINTS" id="PR00153">
    <property type="entry name" value="CSAPPISMRASE"/>
</dbReference>
<dbReference type="SMART" id="SM00360">
    <property type="entry name" value="RRM"/>
    <property type="match status" value="1"/>
</dbReference>
<dbReference type="SUPFAM" id="SSF50891">
    <property type="entry name" value="Cyclophilin-like"/>
    <property type="match status" value="1"/>
</dbReference>
<dbReference type="SUPFAM" id="SSF54928">
    <property type="entry name" value="RNA-binding domain, RBD"/>
    <property type="match status" value="1"/>
</dbReference>
<dbReference type="PROSITE" id="PS50072">
    <property type="entry name" value="CSA_PPIASE_2"/>
    <property type="match status" value="1"/>
</dbReference>
<dbReference type="PROSITE" id="PS50102">
    <property type="entry name" value="RRM"/>
    <property type="match status" value="1"/>
</dbReference>
<reference evidence="9" key="1">
    <citation type="journal article" date="1998" name="Science">
        <title>Genome sequence of the nematode C. elegans: a platform for investigating biology.</title>
        <authorList>
            <consortium name="The C. elegans sequencing consortium"/>
        </authorList>
    </citation>
    <scope>NUCLEOTIDE SEQUENCE [LARGE SCALE GENOMIC DNA]</scope>
    <source>
        <strain evidence="9">Bristol N2</strain>
    </source>
</reference>
<reference evidence="8" key="2">
    <citation type="journal article" date="2016" name="PLoS Genet.">
        <title>A conserved nuclear cyclophilin is required for both RNA polymerase II elongation and co-transcriptional splicing in Caenorhabditis elegans.</title>
        <authorList>
            <person name="Ahn J.H."/>
            <person name="Rechsteiner A."/>
            <person name="Strome S."/>
            <person name="Kelly W.G."/>
        </authorList>
    </citation>
    <scope>FUNCTION</scope>
    <scope>INTERACTION WITH AMA-1</scope>
    <scope>SUBCELLULAR LOCATION</scope>
    <scope>TISSUE SPECIFICITY</scope>
    <scope>DEVELOPMENTAL STAGE</scope>
    <scope>DISRUPTION PHENOTYPE</scope>
</reference>
<sequence>MAVLIETTLGDLIIDLFVKERPRCSLNFLKLCKKKYYNLNQFHSIERNYVAQTGDPTGTGKGGESVYSDMYGEQGRYFEREDLPKMRHTRMGIVSFVNNGDNMLGSQFFITLGENLDYLDDQHTIFGQVTEGLETLEKLNEQLADTNNRPFKDIRISHTIVLDDPFDEDARISFPPRSPSPTYEMLVKTDQIALDEKEDEDEGKTAEEIAEELQQREMAEQAQILEMVGDLKDADEVPPENVLFVCKLNPVTTDEDLEIIFSRFGKINNCEIVRDRRSGDSLQYAFIEFDNAKSCEQAFFKMDNVLIDDRRIHVDFSQSVSQNYKYKPKSQQQEAPKRRQSPQRRPEVKRSHQRSPSPRRRRSPSPKKDKKRDYRREPARRRRSSDNHRDRDRSYRDNNRDRRDNHRDSDRDRRRHDRSPDRRRDRR</sequence>
<organism evidence="9">
    <name type="scientific">Caenorhabditis elegans</name>
    <dbReference type="NCBI Taxonomy" id="6239"/>
    <lineage>
        <taxon>Eukaryota</taxon>
        <taxon>Metazoa</taxon>
        <taxon>Ecdysozoa</taxon>
        <taxon>Nematoda</taxon>
        <taxon>Chromadorea</taxon>
        <taxon>Rhabditida</taxon>
        <taxon>Rhabditina</taxon>
        <taxon>Rhabditomorpha</taxon>
        <taxon>Rhabditoidea</taxon>
        <taxon>Rhabditidae</taxon>
        <taxon>Peloderinae</taxon>
        <taxon>Caenorhabditis</taxon>
    </lineage>
</organism>
<proteinExistence type="evidence at protein level"/>